<sequence length="212" mass="24454">MNIFRLTGDLSHLAAIVILLLKIWKTRSCAGISGKSQLLFALVFTTRYLDLFTSFISLYNTSMKLIYIACSYATVYLIYMKFKATYDGNHDTFRVEFLVVPVGGLSFLVNHDFSPLEILWTFSIYLESVAILPQLFMISKTGEAETITTHYLFFLGLYRALYLVNWIWRFYFEGFFDLIAVVAGVVQTILYCDFFYLYITKVLKGKKLSLPA</sequence>
<name>ERD22_BOVIN</name>
<accession>Q2KJ37</accession>
<feature type="chain" id="PRO_0000252347" description="ER lumen protein-retaining receptor 2">
    <location>
        <begin position="1"/>
        <end position="212"/>
    </location>
</feature>
<feature type="topological domain" description="Lumenal" evidence="4">
    <location>
        <begin position="1"/>
        <end position="4"/>
    </location>
</feature>
<feature type="transmembrane region" description="Helical" evidence="3">
    <location>
        <begin position="5"/>
        <end position="24"/>
    </location>
</feature>
<feature type="topological domain" description="Cytoplasmic" evidence="4">
    <location>
        <begin position="25"/>
        <end position="32"/>
    </location>
</feature>
<feature type="transmembrane region" description="Helical" evidence="3">
    <location>
        <begin position="33"/>
        <end position="52"/>
    </location>
</feature>
<feature type="topological domain" description="Lumenal" evidence="4">
    <location>
        <begin position="53"/>
        <end position="58"/>
    </location>
</feature>
<feature type="transmembrane region" description="Helical" evidence="3">
    <location>
        <begin position="59"/>
        <end position="79"/>
    </location>
</feature>
<feature type="topological domain" description="Cytoplasmic" evidence="4">
    <location>
        <begin position="80"/>
        <end position="92"/>
    </location>
</feature>
<feature type="transmembrane region" description="Helical" evidence="3">
    <location>
        <begin position="93"/>
        <end position="110"/>
    </location>
</feature>
<feature type="topological domain" description="Lumenal" evidence="4">
    <location>
        <begin position="111"/>
        <end position="116"/>
    </location>
</feature>
<feature type="transmembrane region" description="Helical" evidence="3">
    <location>
        <begin position="117"/>
        <end position="135"/>
    </location>
</feature>
<feature type="topological domain" description="Cytoplasmic" evidence="4">
    <location>
        <begin position="136"/>
        <end position="149"/>
    </location>
</feature>
<feature type="transmembrane region" description="Helical" evidence="3">
    <location>
        <begin position="150"/>
        <end position="168"/>
    </location>
</feature>
<feature type="topological domain" description="Lumenal" evidence="4">
    <location>
        <begin position="169"/>
        <end position="178"/>
    </location>
</feature>
<feature type="transmembrane region" description="Helical" evidence="3">
    <location>
        <begin position="179"/>
        <end position="199"/>
    </location>
</feature>
<feature type="topological domain" description="Cytoplasmic" evidence="4">
    <location>
        <begin position="200"/>
        <end position="212"/>
    </location>
</feature>
<feature type="region of interest" description="Interaction with the K-D-E-L motif on target proteins" evidence="3">
    <location>
        <begin position="47"/>
        <end position="48"/>
    </location>
</feature>
<feature type="region of interest" description="Interaction with the K-D-E-L motif on target proteins" evidence="3">
    <location>
        <begin position="159"/>
        <end position="169"/>
    </location>
</feature>
<feature type="region of interest" description="Important for recycling of cargo proteins with the sequence motif K-D-E-L from the Golgi to the endoplasmic reticulum" evidence="1">
    <location>
        <begin position="204"/>
        <end position="207"/>
    </location>
</feature>
<feature type="site" description="Interaction with the K-D-E-L motif on target proteins" evidence="3">
    <location>
        <position position="5"/>
    </location>
</feature>
<feature type="site" description="Interaction with the K-D-E-L motif on target proteins" evidence="3">
    <location>
        <position position="54"/>
    </location>
</feature>
<feature type="site" description="Interaction with the K-D-E-L motif on target proteins" evidence="3">
    <location>
        <position position="117"/>
    </location>
</feature>
<feature type="site" description="Important for recycling of cargo proteins with the sequence motif K-D-E-L from the Golgi to the endoplasmic reticulum" evidence="1">
    <location>
        <position position="193"/>
    </location>
</feature>
<evidence type="ECO:0000250" key="1">
    <source>
        <dbReference type="UniProtKB" id="P24390"/>
    </source>
</evidence>
<evidence type="ECO:0000250" key="2">
    <source>
        <dbReference type="UniProtKB" id="P33947"/>
    </source>
</evidence>
<evidence type="ECO:0000250" key="3">
    <source>
        <dbReference type="UniProtKB" id="Q5ZKX9"/>
    </source>
</evidence>
<evidence type="ECO:0000305" key="4"/>
<organism>
    <name type="scientific">Bos taurus</name>
    <name type="common">Bovine</name>
    <dbReference type="NCBI Taxonomy" id="9913"/>
    <lineage>
        <taxon>Eukaryota</taxon>
        <taxon>Metazoa</taxon>
        <taxon>Chordata</taxon>
        <taxon>Craniata</taxon>
        <taxon>Vertebrata</taxon>
        <taxon>Euteleostomi</taxon>
        <taxon>Mammalia</taxon>
        <taxon>Eutheria</taxon>
        <taxon>Laurasiatheria</taxon>
        <taxon>Artiodactyla</taxon>
        <taxon>Ruminantia</taxon>
        <taxon>Pecora</taxon>
        <taxon>Bovidae</taxon>
        <taxon>Bovinae</taxon>
        <taxon>Bos</taxon>
    </lineage>
</organism>
<gene>
    <name type="primary">KDELR2</name>
</gene>
<keyword id="KW-0968">Cytoplasmic vesicle</keyword>
<keyword id="KW-0256">Endoplasmic reticulum</keyword>
<keyword id="KW-0931">ER-Golgi transport</keyword>
<keyword id="KW-0333">Golgi apparatus</keyword>
<keyword id="KW-0472">Membrane</keyword>
<keyword id="KW-0653">Protein transport</keyword>
<keyword id="KW-0675">Receptor</keyword>
<keyword id="KW-1185">Reference proteome</keyword>
<keyword id="KW-0812">Transmembrane</keyword>
<keyword id="KW-1133">Transmembrane helix</keyword>
<keyword id="KW-0813">Transport</keyword>
<dbReference type="EMBL" id="BC105537">
    <property type="protein sequence ID" value="AAI05538.1"/>
    <property type="molecule type" value="mRNA"/>
</dbReference>
<dbReference type="RefSeq" id="NP_001073247.1">
    <property type="nucleotide sequence ID" value="NM_001079779.1"/>
</dbReference>
<dbReference type="SMR" id="Q2KJ37"/>
<dbReference type="FunCoup" id="Q2KJ37">
    <property type="interactions" value="1958"/>
</dbReference>
<dbReference type="STRING" id="9913.ENSBTAP00000012175"/>
<dbReference type="PaxDb" id="9913-ENSBTAP00000012175"/>
<dbReference type="Ensembl" id="ENSBTAT00000012175.6">
    <property type="protein sequence ID" value="ENSBTAP00000012175.6"/>
    <property type="gene ID" value="ENSBTAG00000009237.7"/>
</dbReference>
<dbReference type="GeneID" id="531676"/>
<dbReference type="KEGG" id="bta:531676"/>
<dbReference type="CTD" id="11014"/>
<dbReference type="VEuPathDB" id="HostDB:ENSBTAG00000009237"/>
<dbReference type="VGNC" id="VGNC:30519">
    <property type="gene designation" value="KDELR2"/>
</dbReference>
<dbReference type="eggNOG" id="KOG3106">
    <property type="taxonomic scope" value="Eukaryota"/>
</dbReference>
<dbReference type="GeneTree" id="ENSGT00390000004010"/>
<dbReference type="InParanoid" id="Q2KJ37"/>
<dbReference type="OMA" id="WKSRSCE"/>
<dbReference type="OrthoDB" id="7694678at2759"/>
<dbReference type="Reactome" id="R-BTA-6807878">
    <property type="pathway name" value="COPI-mediated anterograde transport"/>
</dbReference>
<dbReference type="Reactome" id="R-BTA-6811434">
    <property type="pathway name" value="COPI-dependent Golgi-to-ER retrograde traffic"/>
</dbReference>
<dbReference type="Proteomes" id="UP000009136">
    <property type="component" value="Chromosome 25"/>
</dbReference>
<dbReference type="Bgee" id="ENSBTAG00000009237">
    <property type="expression patterns" value="Expressed in spermatocyte and 104 other cell types or tissues"/>
</dbReference>
<dbReference type="GO" id="GO:0005801">
    <property type="term" value="C:cis-Golgi network"/>
    <property type="evidence" value="ECO:0000318"/>
    <property type="project" value="GO_Central"/>
</dbReference>
<dbReference type="GO" id="GO:0030663">
    <property type="term" value="C:COPI-coated vesicle membrane"/>
    <property type="evidence" value="ECO:0007669"/>
    <property type="project" value="UniProtKB-SubCell"/>
</dbReference>
<dbReference type="GO" id="GO:0005783">
    <property type="term" value="C:endoplasmic reticulum"/>
    <property type="evidence" value="ECO:0000318"/>
    <property type="project" value="GO_Central"/>
</dbReference>
<dbReference type="GO" id="GO:0005789">
    <property type="term" value="C:endoplasmic reticulum membrane"/>
    <property type="evidence" value="ECO:0000250"/>
    <property type="project" value="UniProtKB"/>
</dbReference>
<dbReference type="GO" id="GO:0000139">
    <property type="term" value="C:Golgi membrane"/>
    <property type="evidence" value="ECO:0000250"/>
    <property type="project" value="UniProtKB"/>
</dbReference>
<dbReference type="GO" id="GO:0016020">
    <property type="term" value="C:membrane"/>
    <property type="evidence" value="ECO:0000250"/>
    <property type="project" value="UniProtKB"/>
</dbReference>
<dbReference type="GO" id="GO:0046923">
    <property type="term" value="F:ER retention sequence binding"/>
    <property type="evidence" value="ECO:0000318"/>
    <property type="project" value="GO_Central"/>
</dbReference>
<dbReference type="GO" id="GO:0005046">
    <property type="term" value="F:KDEL sequence binding"/>
    <property type="evidence" value="ECO:0000250"/>
    <property type="project" value="UniProtKB"/>
</dbReference>
<dbReference type="GO" id="GO:0035437">
    <property type="term" value="P:maintenance of protein localization in endoplasmic reticulum"/>
    <property type="evidence" value="ECO:0000250"/>
    <property type="project" value="UniProtKB"/>
</dbReference>
<dbReference type="GO" id="GO:0006621">
    <property type="term" value="P:protein retention in ER lumen"/>
    <property type="evidence" value="ECO:0000318"/>
    <property type="project" value="GO_Central"/>
</dbReference>
<dbReference type="GO" id="GO:0015031">
    <property type="term" value="P:protein transport"/>
    <property type="evidence" value="ECO:0007669"/>
    <property type="project" value="UniProtKB-KW"/>
</dbReference>
<dbReference type="GO" id="GO:0006890">
    <property type="term" value="P:retrograde vesicle-mediated transport, Golgi to endoplasmic reticulum"/>
    <property type="evidence" value="ECO:0000250"/>
    <property type="project" value="UniProtKB"/>
</dbReference>
<dbReference type="InterPro" id="IPR000133">
    <property type="entry name" value="ER_ret_rcpt"/>
</dbReference>
<dbReference type="PANTHER" id="PTHR10585">
    <property type="entry name" value="ER LUMEN PROTEIN RETAINING RECEPTOR"/>
    <property type="match status" value="1"/>
</dbReference>
<dbReference type="Pfam" id="PF00810">
    <property type="entry name" value="ER_lumen_recept"/>
    <property type="match status" value="1"/>
</dbReference>
<dbReference type="PRINTS" id="PR00660">
    <property type="entry name" value="ERLUMENR"/>
</dbReference>
<dbReference type="PROSITE" id="PS00951">
    <property type="entry name" value="ER_LUMEN_RECEPTOR_1"/>
    <property type="match status" value="1"/>
</dbReference>
<dbReference type="PROSITE" id="PS00952">
    <property type="entry name" value="ER_LUMEN_RECEPTOR_2"/>
    <property type="match status" value="1"/>
</dbReference>
<protein>
    <recommendedName>
        <fullName>ER lumen protein-retaining receptor 2</fullName>
    </recommendedName>
    <alternativeName>
        <fullName>KDEL endoplasmic reticulum protein retention receptor 2</fullName>
        <shortName>KDEL receptor 2</shortName>
    </alternativeName>
</protein>
<proteinExistence type="evidence at transcript level"/>
<comment type="function">
    <text evidence="2 3">Membrane receptor that binds the K-D-E-L sequence motif in the C-terminal part of endoplasmic reticulum resident proteins and maintains their localization in that compartment by participating to their vesicle-mediated recycling back from the Golgi (By similarity). Binding is pH dependent, and is optimal at pH 5-5.4 (By similarity).</text>
</comment>
<comment type="subcellular location">
    <subcellularLocation>
        <location evidence="2">Endoplasmic reticulum membrane</location>
        <topology evidence="3">Multi-pass membrane protein</topology>
    </subcellularLocation>
    <subcellularLocation>
        <location evidence="2">Golgi apparatus membrane</location>
        <topology evidence="3">Multi-pass membrane protein</topology>
    </subcellularLocation>
    <subcellularLocation>
        <location evidence="2">Cytoplasmic vesicle</location>
        <location evidence="2">COPI-coated vesicle membrane</location>
        <topology evidence="3">Multi-pass membrane protein</topology>
    </subcellularLocation>
    <text evidence="2">Localized in the Golgi in the absence of bound proteins with the sequence motif K-D-E-L. Trafficks back to the endoplasmic reticulum together with cargo proteins containing the sequence motif K-D-E-L.</text>
</comment>
<comment type="domain">
    <text evidence="1 3">Binds the C-terminal sequence motif K-D-E-L in a hydrophilic cavity between the transmembrane domains. This triggers a conformation change that exposes a Lys-rich patch on the cytosolic surface of the protein (By similarity). This patch mediates recycling from the Golgi to the endoplasmic reticulum, probably via COPI vesicles (By similarity).</text>
</comment>
<comment type="similarity">
    <text evidence="4">Belongs to the ERD2 family.</text>
</comment>
<reference key="1">
    <citation type="submission" date="2005-09" db="EMBL/GenBank/DDBJ databases">
        <authorList>
            <consortium name="NIH - Mammalian Gene Collection (MGC) project"/>
        </authorList>
    </citation>
    <scope>NUCLEOTIDE SEQUENCE [LARGE SCALE MRNA]</scope>
    <source>
        <strain>Hereford</strain>
        <tissue>Uterus</tissue>
    </source>
</reference>